<evidence type="ECO:0000255" key="1"/>
<evidence type="ECO:0000269" key="2">
    <source ref="1"/>
</evidence>
<evidence type="ECO:0000303" key="3">
    <source ref="1"/>
</evidence>
<evidence type="ECO:0000305" key="4"/>
<keyword id="KW-0878">Amphibian defense peptide</keyword>
<keyword id="KW-0044">Antibiotic</keyword>
<keyword id="KW-0929">Antimicrobial</keyword>
<keyword id="KW-0204">Cytolysis</keyword>
<keyword id="KW-0903">Direct protein sequencing</keyword>
<keyword id="KW-0354">Hemolysis</keyword>
<keyword id="KW-0391">Immunity</keyword>
<keyword id="KW-0399">Innate immunity</keyword>
<keyword id="KW-0964">Secreted</keyword>
<protein>
    <recommendedName>
        <fullName evidence="3">Dermaseptin-3</fullName>
        <shortName evidence="3">DStar 03</shortName>
    </recommendedName>
</protein>
<dbReference type="SMR" id="P84923"/>
<dbReference type="GO" id="GO:0005576">
    <property type="term" value="C:extracellular region"/>
    <property type="evidence" value="ECO:0007669"/>
    <property type="project" value="UniProtKB-SubCell"/>
</dbReference>
<dbReference type="GO" id="GO:0042742">
    <property type="term" value="P:defense response to bacterium"/>
    <property type="evidence" value="ECO:0007669"/>
    <property type="project" value="UniProtKB-KW"/>
</dbReference>
<dbReference type="GO" id="GO:0045087">
    <property type="term" value="P:innate immune response"/>
    <property type="evidence" value="ECO:0007669"/>
    <property type="project" value="UniProtKB-KW"/>
</dbReference>
<dbReference type="GO" id="GO:0031640">
    <property type="term" value="P:killing of cells of another organism"/>
    <property type="evidence" value="ECO:0007669"/>
    <property type="project" value="UniProtKB-KW"/>
</dbReference>
<proteinExistence type="evidence at protein level"/>
<organism>
    <name type="scientific">Phyllomedusa tarsius</name>
    <name type="common">Brownbelly leaf frog</name>
    <name type="synonym">Phyllomedusa tarsia</name>
    <dbReference type="NCBI Taxonomy" id="306084"/>
    <lineage>
        <taxon>Eukaryota</taxon>
        <taxon>Metazoa</taxon>
        <taxon>Chordata</taxon>
        <taxon>Craniata</taxon>
        <taxon>Vertebrata</taxon>
        <taxon>Euteleostomi</taxon>
        <taxon>Amphibia</taxon>
        <taxon>Batrachia</taxon>
        <taxon>Anura</taxon>
        <taxon>Neobatrachia</taxon>
        <taxon>Hyloidea</taxon>
        <taxon>Hylidae</taxon>
        <taxon>Phyllomedusinae</taxon>
        <taxon>Phyllomedusa</taxon>
    </lineage>
</organism>
<reference evidence="4" key="1">
    <citation type="submission" date="2006-08" db="UniProtKB">
        <title>Dermaseptins and phylloseptins from Phyllomedusa tarsius (Amphibia).</title>
        <authorList>
            <person name="Prates M.V."/>
            <person name="Jardim D.P."/>
            <person name="Silva L.P."/>
            <person name="Gordo M."/>
            <person name="Leite J.R.S.A."/>
            <person name="Figueredo R.C.R."/>
            <person name="Amaral A.C."/>
            <person name="Felipe M.S.S."/>
            <person name="Bloch C. Jr."/>
        </authorList>
    </citation>
    <scope>PROTEIN SEQUENCE</scope>
    <scope>FUNCTION</scope>
    <scope>SUBCELLULAR LOCATION</scope>
    <scope>TISSUE SPECIFICITY</scope>
    <scope>MASS SPECTROMETRY</scope>
    <source>
        <tissue evidence="2">Skin secretion</tissue>
    </source>
</reference>
<accession>P84923</accession>
<sequence length="30" mass="3129">GLFKTLIKGAGKMLGHVAKQFLGSQGQPES</sequence>
<comment type="function">
    <text evidence="2">Antimicrobial peptide, active against the Gram-positive bacterium S.aureus, the Gram-negative bacteria E.coli and P.aeruginosa, and the yeasts C.albicans and P.brasiliensis. Has hemolytic activity (100% hemolysis at 128 ug/ml).</text>
</comment>
<comment type="subcellular location">
    <subcellularLocation>
        <location evidence="2">Secreted</location>
    </subcellularLocation>
</comment>
<comment type="tissue specificity">
    <text evidence="2">Expressed by the skin glands.</text>
</comment>
<comment type="mass spectrometry" mass="3127.71" error="0.1" method="MALDI" evidence="2"/>
<comment type="similarity">
    <text evidence="1">Belongs to the frog skin active peptide (FSAP) family. Dermaseptin subfamily.</text>
</comment>
<name>DRS3_PHYTS</name>
<feature type="peptide" id="PRO_0000376035" description="Dermaseptin-3" evidence="2">
    <location>
        <begin position="1"/>
        <end position="30"/>
    </location>
</feature>